<name>6PGD_STAAR</name>
<accession>Q6GGI7</accession>
<gene>
    <name type="primary">gnd</name>
    <name type="ordered locus">SAR1589</name>
</gene>
<keyword id="KW-0311">Gluconate utilization</keyword>
<keyword id="KW-0521">NADP</keyword>
<keyword id="KW-0560">Oxidoreductase</keyword>
<keyword id="KW-0570">Pentose shunt</keyword>
<reference key="1">
    <citation type="journal article" date="2004" name="Proc. Natl. Acad. Sci. U.S.A.">
        <title>Complete genomes of two clinical Staphylococcus aureus strains: evidence for the rapid evolution of virulence and drug resistance.</title>
        <authorList>
            <person name="Holden M.T.G."/>
            <person name="Feil E.J."/>
            <person name="Lindsay J.A."/>
            <person name="Peacock S.J."/>
            <person name="Day N.P.J."/>
            <person name="Enright M.C."/>
            <person name="Foster T.J."/>
            <person name="Moore C.E."/>
            <person name="Hurst L."/>
            <person name="Atkin R."/>
            <person name="Barron A."/>
            <person name="Bason N."/>
            <person name="Bentley S.D."/>
            <person name="Chillingworth C."/>
            <person name="Chillingworth T."/>
            <person name="Churcher C."/>
            <person name="Clark L."/>
            <person name="Corton C."/>
            <person name="Cronin A."/>
            <person name="Doggett J."/>
            <person name="Dowd L."/>
            <person name="Feltwell T."/>
            <person name="Hance Z."/>
            <person name="Harris B."/>
            <person name="Hauser H."/>
            <person name="Holroyd S."/>
            <person name="Jagels K."/>
            <person name="James K.D."/>
            <person name="Lennard N."/>
            <person name="Line A."/>
            <person name="Mayes R."/>
            <person name="Moule S."/>
            <person name="Mungall K."/>
            <person name="Ormond D."/>
            <person name="Quail M.A."/>
            <person name="Rabbinowitsch E."/>
            <person name="Rutherford K.M."/>
            <person name="Sanders M."/>
            <person name="Sharp S."/>
            <person name="Simmonds M."/>
            <person name="Stevens K."/>
            <person name="Whitehead S."/>
            <person name="Barrell B.G."/>
            <person name="Spratt B.G."/>
            <person name="Parkhill J."/>
        </authorList>
    </citation>
    <scope>NUCLEOTIDE SEQUENCE [LARGE SCALE GENOMIC DNA]</scope>
    <source>
        <strain>MRSA252</strain>
    </source>
</reference>
<dbReference type="EC" id="1.1.1.44"/>
<dbReference type="EMBL" id="BX571856">
    <property type="protein sequence ID" value="CAG40584.1"/>
    <property type="molecule type" value="Genomic_DNA"/>
</dbReference>
<dbReference type="SMR" id="Q6GGI7"/>
<dbReference type="KEGG" id="sar:SAR1589"/>
<dbReference type="HOGENOM" id="CLU_024540_4_2_9"/>
<dbReference type="UniPathway" id="UPA00115">
    <property type="reaction ID" value="UER00410"/>
</dbReference>
<dbReference type="Proteomes" id="UP000000596">
    <property type="component" value="Chromosome"/>
</dbReference>
<dbReference type="GO" id="GO:0050661">
    <property type="term" value="F:NADP binding"/>
    <property type="evidence" value="ECO:0007669"/>
    <property type="project" value="InterPro"/>
</dbReference>
<dbReference type="GO" id="GO:0004616">
    <property type="term" value="F:phosphogluconate dehydrogenase (decarboxylating) activity"/>
    <property type="evidence" value="ECO:0007669"/>
    <property type="project" value="UniProtKB-EC"/>
</dbReference>
<dbReference type="GO" id="GO:0019521">
    <property type="term" value="P:D-gluconate metabolic process"/>
    <property type="evidence" value="ECO:0007669"/>
    <property type="project" value="UniProtKB-KW"/>
</dbReference>
<dbReference type="GO" id="GO:0016054">
    <property type="term" value="P:organic acid catabolic process"/>
    <property type="evidence" value="ECO:0007669"/>
    <property type="project" value="UniProtKB-ARBA"/>
</dbReference>
<dbReference type="GO" id="GO:0006098">
    <property type="term" value="P:pentose-phosphate shunt"/>
    <property type="evidence" value="ECO:0007669"/>
    <property type="project" value="UniProtKB-UniPathway"/>
</dbReference>
<dbReference type="FunFam" id="1.10.1040.10:FF:000002">
    <property type="entry name" value="6-phosphogluconate dehydrogenase, decarboxylating"/>
    <property type="match status" value="1"/>
</dbReference>
<dbReference type="FunFam" id="1.20.5.320:FF:000001">
    <property type="entry name" value="6-phosphogluconate dehydrogenase, decarboxylating"/>
    <property type="match status" value="1"/>
</dbReference>
<dbReference type="FunFam" id="3.40.50.720:FF:000007">
    <property type="entry name" value="6-phosphogluconate dehydrogenase, decarboxylating"/>
    <property type="match status" value="1"/>
</dbReference>
<dbReference type="Gene3D" id="1.20.5.320">
    <property type="entry name" value="6-Phosphogluconate Dehydrogenase, domain 3"/>
    <property type="match status" value="1"/>
</dbReference>
<dbReference type="Gene3D" id="1.10.1040.10">
    <property type="entry name" value="N-(1-d-carboxylethyl)-l-norvaline Dehydrogenase, domain 2"/>
    <property type="match status" value="1"/>
</dbReference>
<dbReference type="Gene3D" id="3.40.50.720">
    <property type="entry name" value="NAD(P)-binding Rossmann-like Domain"/>
    <property type="match status" value="1"/>
</dbReference>
<dbReference type="InterPro" id="IPR008927">
    <property type="entry name" value="6-PGluconate_DH-like_C_sf"/>
</dbReference>
<dbReference type="InterPro" id="IPR013328">
    <property type="entry name" value="6PGD_dom2"/>
</dbReference>
<dbReference type="InterPro" id="IPR006114">
    <property type="entry name" value="6PGDH_C"/>
</dbReference>
<dbReference type="InterPro" id="IPR006113">
    <property type="entry name" value="6PGDH_Gnd/GntZ"/>
</dbReference>
<dbReference type="InterPro" id="IPR006115">
    <property type="entry name" value="6PGDH_NADP-bd"/>
</dbReference>
<dbReference type="InterPro" id="IPR006184">
    <property type="entry name" value="6PGdom_BS"/>
</dbReference>
<dbReference type="InterPro" id="IPR036291">
    <property type="entry name" value="NAD(P)-bd_dom_sf"/>
</dbReference>
<dbReference type="InterPro" id="IPR006183">
    <property type="entry name" value="Pgluconate_DH"/>
</dbReference>
<dbReference type="NCBIfam" id="TIGR00873">
    <property type="entry name" value="gnd"/>
    <property type="match status" value="1"/>
</dbReference>
<dbReference type="NCBIfam" id="NF006765">
    <property type="entry name" value="PRK09287.1"/>
    <property type="match status" value="1"/>
</dbReference>
<dbReference type="PANTHER" id="PTHR11811">
    <property type="entry name" value="6-PHOSPHOGLUCONATE DEHYDROGENASE"/>
    <property type="match status" value="1"/>
</dbReference>
<dbReference type="Pfam" id="PF00393">
    <property type="entry name" value="6PGD"/>
    <property type="match status" value="1"/>
</dbReference>
<dbReference type="Pfam" id="PF03446">
    <property type="entry name" value="NAD_binding_2"/>
    <property type="match status" value="1"/>
</dbReference>
<dbReference type="PIRSF" id="PIRSF000109">
    <property type="entry name" value="6PGD"/>
    <property type="match status" value="1"/>
</dbReference>
<dbReference type="PRINTS" id="PR00076">
    <property type="entry name" value="6PGDHDRGNASE"/>
</dbReference>
<dbReference type="SMART" id="SM01350">
    <property type="entry name" value="6PGD"/>
    <property type="match status" value="1"/>
</dbReference>
<dbReference type="SUPFAM" id="SSF48179">
    <property type="entry name" value="6-phosphogluconate dehydrogenase C-terminal domain-like"/>
    <property type="match status" value="1"/>
</dbReference>
<dbReference type="SUPFAM" id="SSF51735">
    <property type="entry name" value="NAD(P)-binding Rossmann-fold domains"/>
    <property type="match status" value="1"/>
</dbReference>
<dbReference type="PROSITE" id="PS00461">
    <property type="entry name" value="6PGD"/>
    <property type="match status" value="1"/>
</dbReference>
<comment type="function">
    <text evidence="1">Catalyzes the oxidative decarboxylation of 6-phosphogluconate to ribulose 5-phosphate and CO(2), with concomitant reduction of NADP to NADPH.</text>
</comment>
<comment type="catalytic activity">
    <reaction>
        <text>6-phospho-D-gluconate + NADP(+) = D-ribulose 5-phosphate + CO2 + NADPH</text>
        <dbReference type="Rhea" id="RHEA:10116"/>
        <dbReference type="ChEBI" id="CHEBI:16526"/>
        <dbReference type="ChEBI" id="CHEBI:57783"/>
        <dbReference type="ChEBI" id="CHEBI:58121"/>
        <dbReference type="ChEBI" id="CHEBI:58349"/>
        <dbReference type="ChEBI" id="CHEBI:58759"/>
        <dbReference type="EC" id="1.1.1.44"/>
    </reaction>
</comment>
<comment type="pathway">
    <text>Carbohydrate degradation; pentose phosphate pathway; D-ribulose 5-phosphate from D-glucose 6-phosphate (oxidative stage): step 3/3.</text>
</comment>
<comment type="subunit">
    <text evidence="1">Homodimer.</text>
</comment>
<comment type="similarity">
    <text evidence="2">Belongs to the 6-phosphogluconate dehydrogenase family.</text>
</comment>
<sequence>MTQQIGVIGLAVMGKNLAWNIESRGYSVSVFNRSSEKTDLMVEESKGKNIHPTYSLEEFVNSLEKPRKILLMVQAGKATDATIDSLLPLLDDGDILIDGGNTNYQDTIRRNKALAQSAINFIGMGVSGGEIGALTGPSLMPGGQEEAYNKVADILDAIAAKAKDGASCVTYIGPNGAGHYVKMVHNGIEYADMQLIAESYAMMKELLGMSHEDIAQTFKDWNAGELESYLIEITGDIFMKLDENKEALVEKILDTAGQKGTGKWTSINALELGIPLTIITESVFARFISSIKEERVNASKELNGPKASFDGDKKDFLEKIRKALYMSKICSYAQGFAQMRKASEDNEWNLKLGDLAMIWREGCIIRAQFLQKIKDAYDNNPGLQNLLLDPYFKNIVTEYQDALRDVVATGVQNGVPTPGFSSSINYYDSYRAADLPANLIQAQRDYFGAHTYERKDKEGVFHTQWIEE</sequence>
<evidence type="ECO:0000250" key="1"/>
<evidence type="ECO:0000305" key="2"/>
<protein>
    <recommendedName>
        <fullName>6-phosphogluconate dehydrogenase, decarboxylating</fullName>
        <ecNumber>1.1.1.44</ecNumber>
    </recommendedName>
</protein>
<organism>
    <name type="scientific">Staphylococcus aureus (strain MRSA252)</name>
    <dbReference type="NCBI Taxonomy" id="282458"/>
    <lineage>
        <taxon>Bacteria</taxon>
        <taxon>Bacillati</taxon>
        <taxon>Bacillota</taxon>
        <taxon>Bacilli</taxon>
        <taxon>Bacillales</taxon>
        <taxon>Staphylococcaceae</taxon>
        <taxon>Staphylococcus</taxon>
    </lineage>
</organism>
<proteinExistence type="inferred from homology"/>
<feature type="chain" id="PRO_0000090055" description="6-phosphogluconate dehydrogenase, decarboxylating">
    <location>
        <begin position="1"/>
        <end position="468"/>
    </location>
</feature>
<feature type="active site" description="Proton acceptor" evidence="1">
    <location>
        <position position="182"/>
    </location>
</feature>
<feature type="active site" description="Proton donor" evidence="1">
    <location>
        <position position="189"/>
    </location>
</feature>
<feature type="binding site" evidence="1">
    <location>
        <begin position="9"/>
        <end position="14"/>
    </location>
    <ligand>
        <name>NADP(+)</name>
        <dbReference type="ChEBI" id="CHEBI:58349"/>
    </ligand>
</feature>
<feature type="binding site" evidence="1">
    <location>
        <begin position="32"/>
        <end position="34"/>
    </location>
    <ligand>
        <name>NADP(+)</name>
        <dbReference type="ChEBI" id="CHEBI:58349"/>
    </ligand>
</feature>
<feature type="binding site" evidence="1">
    <location>
        <begin position="73"/>
        <end position="75"/>
    </location>
    <ligand>
        <name>NADP(+)</name>
        <dbReference type="ChEBI" id="CHEBI:58349"/>
    </ligand>
</feature>
<feature type="binding site" evidence="1">
    <location>
        <position position="101"/>
    </location>
    <ligand>
        <name>NADP(+)</name>
        <dbReference type="ChEBI" id="CHEBI:58349"/>
    </ligand>
</feature>
<feature type="binding site" description="in other chain" evidence="1">
    <location>
        <position position="101"/>
    </location>
    <ligand>
        <name>substrate</name>
        <note>ligand shared between dimeric partners</note>
    </ligand>
</feature>
<feature type="binding site" description="in other chain" evidence="1">
    <location>
        <begin position="127"/>
        <end position="129"/>
    </location>
    <ligand>
        <name>substrate</name>
        <note>ligand shared between dimeric partners</note>
    </ligand>
</feature>
<feature type="binding site" description="in other chain" evidence="1">
    <location>
        <begin position="185"/>
        <end position="186"/>
    </location>
    <ligand>
        <name>substrate</name>
        <note>ligand shared between dimeric partners</note>
    </ligand>
</feature>
<feature type="binding site" description="in other chain" evidence="1">
    <location>
        <position position="190"/>
    </location>
    <ligand>
        <name>substrate</name>
        <note>ligand shared between dimeric partners</note>
    </ligand>
</feature>
<feature type="binding site" description="in other chain" evidence="1">
    <location>
        <position position="259"/>
    </location>
    <ligand>
        <name>substrate</name>
        <note>ligand shared between dimeric partners</note>
    </ligand>
</feature>
<feature type="binding site" description="in other chain" evidence="1">
    <location>
        <position position="286"/>
    </location>
    <ligand>
        <name>substrate</name>
        <note>ligand shared between dimeric partners</note>
    </ligand>
</feature>
<feature type="binding site" evidence="1">
    <location>
        <position position="444"/>
    </location>
    <ligand>
        <name>substrate</name>
        <note>ligand shared between dimeric partners</note>
    </ligand>
</feature>
<feature type="binding site" evidence="1">
    <location>
        <position position="450"/>
    </location>
    <ligand>
        <name>substrate</name>
        <note>ligand shared between dimeric partners</note>
    </ligand>
</feature>